<organism>
    <name type="scientific">Bacillus licheniformis (strain ATCC 14580 / DSM 13 / JCM 2505 / CCUG 7422 / NBRC 12200 / NCIMB 9375 / NCTC 10341 / NRRL NRS-1264 / Gibson 46)</name>
    <dbReference type="NCBI Taxonomy" id="279010"/>
    <lineage>
        <taxon>Bacteria</taxon>
        <taxon>Bacillati</taxon>
        <taxon>Bacillota</taxon>
        <taxon>Bacilli</taxon>
        <taxon>Bacillales</taxon>
        <taxon>Bacillaceae</taxon>
        <taxon>Bacillus</taxon>
    </lineage>
</organism>
<keyword id="KW-0963">Cytoplasm</keyword>
<keyword id="KW-0501">Molybdenum cofactor biosynthesis</keyword>
<keyword id="KW-1185">Reference proteome</keyword>
<sequence>MGKNITTSRKIFRYDNGELVQQEDQMATEFPLTVMVNGEEFVTLVCSPDSLEELVIGFLASEGVIRFKNEIKRFTIDESLGFAYVDLVSTKKLQLKDYTKRVIGSCCGKGRHFYFQQDVKTAKTAIDGVTITPENCLKLMRDMQKSSKLFHHTGGVHNAALCSTDKLIAVRSDIGRHNALDKLYGYCLLHQVPVRDKLIVFSGRISSEVLLKAAKIGVSAVISKSAPTELAIQMAEELNIMTIGFARNRSFNVYTHHERIQFS</sequence>
<feature type="chain" id="PRO_0000152888" description="Sulfur carrier protein FdhD">
    <location>
        <begin position="1"/>
        <end position="263"/>
    </location>
</feature>
<feature type="active site" description="Cysteine persulfide intermediate" evidence="1">
    <location>
        <position position="107"/>
    </location>
</feature>
<name>FDHD_BACLD</name>
<reference key="1">
    <citation type="journal article" date="2004" name="J. Mol. Microbiol. Biotechnol.">
        <title>The complete genome sequence of Bacillus licheniformis DSM13, an organism with great industrial potential.</title>
        <authorList>
            <person name="Veith B."/>
            <person name="Herzberg C."/>
            <person name="Steckel S."/>
            <person name="Feesche J."/>
            <person name="Maurer K.H."/>
            <person name="Ehrenreich P."/>
            <person name="Baeumer S."/>
            <person name="Henne A."/>
            <person name="Liesegang H."/>
            <person name="Merkl R."/>
            <person name="Ehrenreich A."/>
            <person name="Gottschalk G."/>
        </authorList>
    </citation>
    <scope>NUCLEOTIDE SEQUENCE [LARGE SCALE GENOMIC DNA]</scope>
    <source>
        <strain>ATCC 14580 / DSM 13 / JCM 2505 / CCUG 7422 / NBRC 12200 / NCIMB 9375 / NCTC 10341 / NRRL NRS-1264 / Gibson 46</strain>
    </source>
</reference>
<reference key="2">
    <citation type="journal article" date="2004" name="Genome Biol.">
        <title>Complete genome sequence of the industrial bacterium Bacillus licheniformis and comparisons with closely related Bacillus species.</title>
        <authorList>
            <person name="Rey M.W."/>
            <person name="Ramaiya P."/>
            <person name="Nelson B.A."/>
            <person name="Brody-Karpin S.D."/>
            <person name="Zaretsky E.J."/>
            <person name="Tang M."/>
            <person name="Lopez de Leon A."/>
            <person name="Xiang H."/>
            <person name="Gusti V."/>
            <person name="Clausen I.G."/>
            <person name="Olsen P.B."/>
            <person name="Rasmussen M.D."/>
            <person name="Andersen J.T."/>
            <person name="Joergensen P.L."/>
            <person name="Larsen T.S."/>
            <person name="Sorokin A."/>
            <person name="Bolotin A."/>
            <person name="Lapidus A."/>
            <person name="Galleron N."/>
            <person name="Ehrlich S.D."/>
            <person name="Berka R.M."/>
        </authorList>
    </citation>
    <scope>NUCLEOTIDE SEQUENCE [LARGE SCALE GENOMIC DNA]</scope>
    <source>
        <strain>ATCC 14580 / DSM 13 / JCM 2505 / CCUG 7422 / NBRC 12200 / NCIMB 9375 / NCTC 10341 / NRRL NRS-1264 / Gibson 46</strain>
    </source>
</reference>
<gene>
    <name evidence="1" type="primary">fdhD</name>
    <name type="ordered locus">BLi03916</name>
    <name type="ordered locus">BL04008</name>
</gene>
<dbReference type="EMBL" id="AE017333">
    <property type="protein sequence ID" value="AAU42730.1"/>
    <property type="molecule type" value="Genomic_DNA"/>
</dbReference>
<dbReference type="EMBL" id="CP000002">
    <property type="protein sequence ID" value="AAU25356.1"/>
    <property type="molecule type" value="Genomic_DNA"/>
</dbReference>
<dbReference type="RefSeq" id="WP_003185983.1">
    <property type="nucleotide sequence ID" value="NC_006322.1"/>
</dbReference>
<dbReference type="SMR" id="Q65DY4"/>
<dbReference type="STRING" id="279010.BL04008"/>
<dbReference type="GeneID" id="92859511"/>
<dbReference type="KEGG" id="bld:BLi03916"/>
<dbReference type="KEGG" id="bli:BL04008"/>
<dbReference type="eggNOG" id="COG1526">
    <property type="taxonomic scope" value="Bacteria"/>
</dbReference>
<dbReference type="HOGENOM" id="CLU_056887_4_1_9"/>
<dbReference type="Proteomes" id="UP000000606">
    <property type="component" value="Chromosome"/>
</dbReference>
<dbReference type="GO" id="GO:0005737">
    <property type="term" value="C:cytoplasm"/>
    <property type="evidence" value="ECO:0007669"/>
    <property type="project" value="UniProtKB-SubCell"/>
</dbReference>
<dbReference type="GO" id="GO:0097163">
    <property type="term" value="F:sulfur carrier activity"/>
    <property type="evidence" value="ECO:0007669"/>
    <property type="project" value="UniProtKB-UniRule"/>
</dbReference>
<dbReference type="GO" id="GO:0016783">
    <property type="term" value="F:sulfurtransferase activity"/>
    <property type="evidence" value="ECO:0007669"/>
    <property type="project" value="InterPro"/>
</dbReference>
<dbReference type="GO" id="GO:0006777">
    <property type="term" value="P:Mo-molybdopterin cofactor biosynthetic process"/>
    <property type="evidence" value="ECO:0007669"/>
    <property type="project" value="UniProtKB-UniRule"/>
</dbReference>
<dbReference type="Gene3D" id="3.10.20.10">
    <property type="match status" value="1"/>
</dbReference>
<dbReference type="Gene3D" id="3.40.140.10">
    <property type="entry name" value="Cytidine Deaminase, domain 2"/>
    <property type="match status" value="1"/>
</dbReference>
<dbReference type="HAMAP" id="MF_00187">
    <property type="entry name" value="FdhD"/>
    <property type="match status" value="1"/>
</dbReference>
<dbReference type="InterPro" id="IPR016193">
    <property type="entry name" value="Cytidine_deaminase-like"/>
</dbReference>
<dbReference type="InterPro" id="IPR003786">
    <property type="entry name" value="FdhD"/>
</dbReference>
<dbReference type="NCBIfam" id="TIGR00129">
    <property type="entry name" value="fdhD_narQ"/>
    <property type="match status" value="1"/>
</dbReference>
<dbReference type="PANTHER" id="PTHR30592">
    <property type="entry name" value="FORMATE DEHYDROGENASE"/>
    <property type="match status" value="1"/>
</dbReference>
<dbReference type="PANTHER" id="PTHR30592:SF1">
    <property type="entry name" value="SULFUR CARRIER PROTEIN FDHD"/>
    <property type="match status" value="1"/>
</dbReference>
<dbReference type="Pfam" id="PF02634">
    <property type="entry name" value="FdhD-NarQ"/>
    <property type="match status" value="1"/>
</dbReference>
<dbReference type="PIRSF" id="PIRSF015626">
    <property type="entry name" value="FdhD"/>
    <property type="match status" value="1"/>
</dbReference>
<dbReference type="SUPFAM" id="SSF53927">
    <property type="entry name" value="Cytidine deaminase-like"/>
    <property type="match status" value="1"/>
</dbReference>
<accession>Q65DY4</accession>
<accession>Q62PF5</accession>
<evidence type="ECO:0000255" key="1">
    <source>
        <dbReference type="HAMAP-Rule" id="MF_00187"/>
    </source>
</evidence>
<proteinExistence type="inferred from homology"/>
<protein>
    <recommendedName>
        <fullName evidence="1">Sulfur carrier protein FdhD</fullName>
    </recommendedName>
</protein>
<comment type="function">
    <text evidence="1">Required for formate dehydrogenase (FDH) activity. Acts as a sulfur carrier protein that transfers sulfur from IscS to the molybdenum cofactor prior to its insertion into FDH.</text>
</comment>
<comment type="subcellular location">
    <subcellularLocation>
        <location evidence="1">Cytoplasm</location>
    </subcellularLocation>
</comment>
<comment type="similarity">
    <text evidence="1">Belongs to the FdhD family.</text>
</comment>